<feature type="chain" id="PRO_0000241664" description="Large ribosomal subunit protein uL24">
    <location>
        <begin position="1"/>
        <end position="104"/>
    </location>
</feature>
<evidence type="ECO:0000255" key="1">
    <source>
        <dbReference type="HAMAP-Rule" id="MF_01326"/>
    </source>
</evidence>
<evidence type="ECO:0000305" key="2"/>
<organism>
    <name type="scientific">Sodalis glossinidius (strain morsitans)</name>
    <dbReference type="NCBI Taxonomy" id="343509"/>
    <lineage>
        <taxon>Bacteria</taxon>
        <taxon>Pseudomonadati</taxon>
        <taxon>Pseudomonadota</taxon>
        <taxon>Gammaproteobacteria</taxon>
        <taxon>Enterobacterales</taxon>
        <taxon>Bruguierivoracaceae</taxon>
        <taxon>Sodalis</taxon>
    </lineage>
</organism>
<sequence length="104" mass="11195">MAAKIRRDDEVIVLTGKDKGKRGKVKNVLSSGKAIVEGINLIKKHQKPVPAMNQPGGIVEKEAAIDLSNLAIFNAAASKADRVGFKIEDGKKVRVFKSNGETIK</sequence>
<dbReference type="EMBL" id="AP008232">
    <property type="protein sequence ID" value="BAE75542.1"/>
    <property type="molecule type" value="Genomic_DNA"/>
</dbReference>
<dbReference type="RefSeq" id="WP_011412077.1">
    <property type="nucleotide sequence ID" value="NC_007712.1"/>
</dbReference>
<dbReference type="SMR" id="Q2NQN3"/>
<dbReference type="STRING" id="343509.SG2267"/>
<dbReference type="KEGG" id="sgl:SG2267"/>
<dbReference type="eggNOG" id="COG0198">
    <property type="taxonomic scope" value="Bacteria"/>
</dbReference>
<dbReference type="HOGENOM" id="CLU_093315_2_2_6"/>
<dbReference type="OrthoDB" id="9807419at2"/>
<dbReference type="BioCyc" id="SGLO343509:SGP1_RS20785-MONOMER"/>
<dbReference type="Proteomes" id="UP000001932">
    <property type="component" value="Chromosome"/>
</dbReference>
<dbReference type="GO" id="GO:1990904">
    <property type="term" value="C:ribonucleoprotein complex"/>
    <property type="evidence" value="ECO:0007669"/>
    <property type="project" value="UniProtKB-KW"/>
</dbReference>
<dbReference type="GO" id="GO:0005840">
    <property type="term" value="C:ribosome"/>
    <property type="evidence" value="ECO:0007669"/>
    <property type="project" value="UniProtKB-KW"/>
</dbReference>
<dbReference type="GO" id="GO:0019843">
    <property type="term" value="F:rRNA binding"/>
    <property type="evidence" value="ECO:0007669"/>
    <property type="project" value="UniProtKB-UniRule"/>
</dbReference>
<dbReference type="GO" id="GO:0003735">
    <property type="term" value="F:structural constituent of ribosome"/>
    <property type="evidence" value="ECO:0007669"/>
    <property type="project" value="InterPro"/>
</dbReference>
<dbReference type="GO" id="GO:0006412">
    <property type="term" value="P:translation"/>
    <property type="evidence" value="ECO:0007669"/>
    <property type="project" value="UniProtKB-UniRule"/>
</dbReference>
<dbReference type="CDD" id="cd06089">
    <property type="entry name" value="KOW_RPL26"/>
    <property type="match status" value="1"/>
</dbReference>
<dbReference type="FunFam" id="2.30.30.30:FF:000004">
    <property type="entry name" value="50S ribosomal protein L24"/>
    <property type="match status" value="1"/>
</dbReference>
<dbReference type="Gene3D" id="2.30.30.30">
    <property type="match status" value="1"/>
</dbReference>
<dbReference type="HAMAP" id="MF_01326_B">
    <property type="entry name" value="Ribosomal_uL24_B"/>
    <property type="match status" value="1"/>
</dbReference>
<dbReference type="InterPro" id="IPR005824">
    <property type="entry name" value="KOW"/>
</dbReference>
<dbReference type="InterPro" id="IPR014722">
    <property type="entry name" value="Rib_uL2_dom2"/>
</dbReference>
<dbReference type="InterPro" id="IPR003256">
    <property type="entry name" value="Ribosomal_uL24"/>
</dbReference>
<dbReference type="InterPro" id="IPR005825">
    <property type="entry name" value="Ribosomal_uL24_CS"/>
</dbReference>
<dbReference type="InterPro" id="IPR041988">
    <property type="entry name" value="Ribosomal_uL24_KOW"/>
</dbReference>
<dbReference type="InterPro" id="IPR008991">
    <property type="entry name" value="Translation_prot_SH3-like_sf"/>
</dbReference>
<dbReference type="NCBIfam" id="TIGR01079">
    <property type="entry name" value="rplX_bact"/>
    <property type="match status" value="1"/>
</dbReference>
<dbReference type="PANTHER" id="PTHR12903">
    <property type="entry name" value="MITOCHONDRIAL RIBOSOMAL PROTEIN L24"/>
    <property type="match status" value="1"/>
</dbReference>
<dbReference type="Pfam" id="PF00467">
    <property type="entry name" value="KOW"/>
    <property type="match status" value="1"/>
</dbReference>
<dbReference type="Pfam" id="PF17136">
    <property type="entry name" value="ribosomal_L24"/>
    <property type="match status" value="1"/>
</dbReference>
<dbReference type="SMART" id="SM00739">
    <property type="entry name" value="KOW"/>
    <property type="match status" value="1"/>
</dbReference>
<dbReference type="SUPFAM" id="SSF50104">
    <property type="entry name" value="Translation proteins SH3-like domain"/>
    <property type="match status" value="1"/>
</dbReference>
<dbReference type="PROSITE" id="PS01108">
    <property type="entry name" value="RIBOSOMAL_L24"/>
    <property type="match status" value="1"/>
</dbReference>
<keyword id="KW-0687">Ribonucleoprotein</keyword>
<keyword id="KW-0689">Ribosomal protein</keyword>
<keyword id="KW-0694">RNA-binding</keyword>
<keyword id="KW-0699">rRNA-binding</keyword>
<proteinExistence type="inferred from homology"/>
<name>RL24_SODGM</name>
<comment type="function">
    <text evidence="1">One of two assembly initiator proteins, it binds directly to the 5'-end of the 23S rRNA, where it nucleates assembly of the 50S subunit.</text>
</comment>
<comment type="function">
    <text evidence="1">One of the proteins that surrounds the polypeptide exit tunnel on the outside of the subunit.</text>
</comment>
<comment type="subunit">
    <text evidence="1">Part of the 50S ribosomal subunit.</text>
</comment>
<comment type="similarity">
    <text evidence="1">Belongs to the universal ribosomal protein uL24 family.</text>
</comment>
<protein>
    <recommendedName>
        <fullName evidence="1">Large ribosomal subunit protein uL24</fullName>
    </recommendedName>
    <alternativeName>
        <fullName evidence="2">50S ribosomal protein L24</fullName>
    </alternativeName>
</protein>
<gene>
    <name evidence="1" type="primary">rplX</name>
    <name type="ordered locus">SG2267</name>
</gene>
<accession>Q2NQN3</accession>
<reference key="1">
    <citation type="journal article" date="2006" name="Genome Res.">
        <title>Massive genome erosion and functional adaptations provide insights into the symbiotic lifestyle of Sodalis glossinidius in the tsetse host.</title>
        <authorList>
            <person name="Toh H."/>
            <person name="Weiss B.L."/>
            <person name="Perkin S.A.H."/>
            <person name="Yamashita A."/>
            <person name="Oshima K."/>
            <person name="Hattori M."/>
            <person name="Aksoy S."/>
        </authorList>
    </citation>
    <scope>NUCLEOTIDE SEQUENCE [LARGE SCALE GENOMIC DNA]</scope>
    <source>
        <strain>morsitans</strain>
    </source>
</reference>